<evidence type="ECO:0000255" key="1">
    <source>
        <dbReference type="HAMAP-Rule" id="MF_00644"/>
    </source>
</evidence>
<reference key="1">
    <citation type="journal article" date="2006" name="Theor. Appl. Genet.">
        <title>Complete chloroplast genome sequences of Solanum bulbocastanum, Solanum lycopersicum and comparative analyses with other Solanaceae genomes.</title>
        <authorList>
            <person name="Daniell H."/>
            <person name="Lee S.-B."/>
            <person name="Grevich J."/>
            <person name="Saski C."/>
            <person name="Quesada-Vargas T."/>
            <person name="Guda C."/>
            <person name="Tomkins J."/>
            <person name="Jansen R.K."/>
        </authorList>
    </citation>
    <scope>NUCLEOTIDE SEQUENCE [LARGE SCALE GENOMIC DNA]</scope>
    <source>
        <strain>cv. PT29</strain>
    </source>
</reference>
<comment type="function">
    <text evidence="1">May control the interaction of photosystem II (PSII) cores with the light-harvesting antenna, regulates electron flow through the 2 photosystem reaction centers. PSII is a light-driven water plastoquinone oxidoreductase, using light energy to abstract electrons from H(2)O, generating a proton gradient subsequently used for ATP formation.</text>
</comment>
<comment type="subunit">
    <text evidence="1">PSII is composed of 1 copy each of membrane proteins PsbA, PsbB, PsbC, PsbD, PsbE, PsbF, PsbH, PsbI, PsbJ, PsbK, PsbL, PsbM, PsbT, PsbY, PsbZ, Psb30/Ycf12, at least 3 peripheral proteins of the oxygen-evolving complex and a large number of cofactors. It forms dimeric complexes.</text>
</comment>
<comment type="subcellular location">
    <subcellularLocation>
        <location evidence="1">Plastid</location>
        <location evidence="1">Chloroplast thylakoid membrane</location>
        <topology evidence="1">Multi-pass membrane protein</topology>
    </subcellularLocation>
</comment>
<comment type="similarity">
    <text evidence="1">Belongs to the PsbZ family.</text>
</comment>
<geneLocation type="chloroplast"/>
<protein>
    <recommendedName>
        <fullName evidence="1">Photosystem II reaction center protein Z</fullName>
        <shortName evidence="1">PSII-Z</shortName>
    </recommendedName>
</protein>
<keyword id="KW-0150">Chloroplast</keyword>
<keyword id="KW-0472">Membrane</keyword>
<keyword id="KW-0602">Photosynthesis</keyword>
<keyword id="KW-0604">Photosystem II</keyword>
<keyword id="KW-0934">Plastid</keyword>
<keyword id="KW-0674">Reaction center</keyword>
<keyword id="KW-0793">Thylakoid</keyword>
<keyword id="KW-0812">Transmembrane</keyword>
<keyword id="KW-1133">Transmembrane helix</keyword>
<accession>Q2MIJ0</accession>
<dbReference type="EMBL" id="DQ347958">
    <property type="protein sequence ID" value="ABC56210.1"/>
    <property type="molecule type" value="Genomic_DNA"/>
</dbReference>
<dbReference type="RefSeq" id="YP_538845.1">
    <property type="nucleotide sequence ID" value="NC_007943.1"/>
</dbReference>
<dbReference type="SMR" id="Q2MIJ0"/>
<dbReference type="GeneID" id="3989531"/>
<dbReference type="GO" id="GO:0009535">
    <property type="term" value="C:chloroplast thylakoid membrane"/>
    <property type="evidence" value="ECO:0007669"/>
    <property type="project" value="UniProtKB-SubCell"/>
</dbReference>
<dbReference type="GO" id="GO:0009539">
    <property type="term" value="C:photosystem II reaction center"/>
    <property type="evidence" value="ECO:0007669"/>
    <property type="project" value="InterPro"/>
</dbReference>
<dbReference type="GO" id="GO:0015979">
    <property type="term" value="P:photosynthesis"/>
    <property type="evidence" value="ECO:0007669"/>
    <property type="project" value="UniProtKB-UniRule"/>
</dbReference>
<dbReference type="GO" id="GO:0042549">
    <property type="term" value="P:photosystem II stabilization"/>
    <property type="evidence" value="ECO:0007669"/>
    <property type="project" value="InterPro"/>
</dbReference>
<dbReference type="FunFam" id="1.10.287.740:FF:000001">
    <property type="entry name" value="Photosystem II reaction center protein Z"/>
    <property type="match status" value="1"/>
</dbReference>
<dbReference type="Gene3D" id="1.10.287.740">
    <property type="entry name" value="Photosystem II PsbZ, reaction centre"/>
    <property type="match status" value="1"/>
</dbReference>
<dbReference type="HAMAP" id="MF_00644">
    <property type="entry name" value="PSII_PsbZ"/>
    <property type="match status" value="1"/>
</dbReference>
<dbReference type="InterPro" id="IPR002644">
    <property type="entry name" value="PSII_PsbZ"/>
</dbReference>
<dbReference type="InterPro" id="IPR036512">
    <property type="entry name" value="PSII_PsbZ_sf"/>
</dbReference>
<dbReference type="NCBIfam" id="TIGR03043">
    <property type="entry name" value="PS_II_psbZ"/>
    <property type="match status" value="1"/>
</dbReference>
<dbReference type="PANTHER" id="PTHR34971">
    <property type="entry name" value="PHOTOSYSTEM II REACTION CENTER PROTEIN Z"/>
    <property type="match status" value="1"/>
</dbReference>
<dbReference type="PANTHER" id="PTHR34971:SF2">
    <property type="entry name" value="PHOTOSYSTEM II REACTION CENTER PROTEIN Z"/>
    <property type="match status" value="1"/>
</dbReference>
<dbReference type="Pfam" id="PF01737">
    <property type="entry name" value="Ycf9"/>
    <property type="match status" value="1"/>
</dbReference>
<dbReference type="SUPFAM" id="SSF161055">
    <property type="entry name" value="PsbZ-like"/>
    <property type="match status" value="1"/>
</dbReference>
<organism>
    <name type="scientific">Solanum bulbocastanum</name>
    <name type="common">Wild potato</name>
    <dbReference type="NCBI Taxonomy" id="147425"/>
    <lineage>
        <taxon>Eukaryota</taxon>
        <taxon>Viridiplantae</taxon>
        <taxon>Streptophyta</taxon>
        <taxon>Embryophyta</taxon>
        <taxon>Tracheophyta</taxon>
        <taxon>Spermatophyta</taxon>
        <taxon>Magnoliopsida</taxon>
        <taxon>eudicotyledons</taxon>
        <taxon>Gunneridae</taxon>
        <taxon>Pentapetalae</taxon>
        <taxon>asterids</taxon>
        <taxon>lamiids</taxon>
        <taxon>Solanales</taxon>
        <taxon>Solanaceae</taxon>
        <taxon>Solanoideae</taxon>
        <taxon>Solaneae</taxon>
        <taxon>Solanum</taxon>
    </lineage>
</organism>
<sequence>MTLAFQLAVFALIATSLILLISVPVVFASPDGWSSNKNVVFSGTSLWIGLVFLVGILNSLIS</sequence>
<feature type="chain" id="PRO_0000277235" description="Photosystem II reaction center protein Z">
    <location>
        <begin position="1"/>
        <end position="62"/>
    </location>
</feature>
<feature type="transmembrane region" description="Helical" evidence="1">
    <location>
        <begin position="8"/>
        <end position="28"/>
    </location>
</feature>
<feature type="transmembrane region" description="Helical" evidence="1">
    <location>
        <begin position="41"/>
        <end position="61"/>
    </location>
</feature>
<proteinExistence type="inferred from homology"/>
<name>PSBZ_SOLBU</name>
<gene>
    <name evidence="1" type="primary">psbZ</name>
</gene>